<reference key="1">
    <citation type="submission" date="2006-08" db="EMBL/GenBank/DDBJ databases">
        <title>Complete sequence of Alkalilimnicola ehrilichei MLHE-1.</title>
        <authorList>
            <person name="Copeland A."/>
            <person name="Lucas S."/>
            <person name="Lapidus A."/>
            <person name="Barry K."/>
            <person name="Detter J.C."/>
            <person name="Glavina del Rio T."/>
            <person name="Hammon N."/>
            <person name="Israni S."/>
            <person name="Dalin E."/>
            <person name="Tice H."/>
            <person name="Pitluck S."/>
            <person name="Sims D."/>
            <person name="Brettin T."/>
            <person name="Bruce D."/>
            <person name="Han C."/>
            <person name="Tapia R."/>
            <person name="Gilna P."/>
            <person name="Schmutz J."/>
            <person name="Larimer F."/>
            <person name="Land M."/>
            <person name="Hauser L."/>
            <person name="Kyrpides N."/>
            <person name="Mikhailova N."/>
            <person name="Oremland R.S."/>
            <person name="Hoeft S.E."/>
            <person name="Switzer-Blum J."/>
            <person name="Kulp T."/>
            <person name="King G."/>
            <person name="Tabita R."/>
            <person name="Witte B."/>
            <person name="Santini J.M."/>
            <person name="Basu P."/>
            <person name="Hollibaugh J.T."/>
            <person name="Xie G."/>
            <person name="Stolz J.F."/>
            <person name="Richardson P."/>
        </authorList>
    </citation>
    <scope>NUCLEOTIDE SEQUENCE [LARGE SCALE GENOMIC DNA]</scope>
    <source>
        <strain>ATCC BAA-1101 / DSM 17681 / MLHE-1</strain>
    </source>
</reference>
<evidence type="ECO:0000255" key="1">
    <source>
        <dbReference type="HAMAP-Rule" id="MF_00558"/>
    </source>
</evidence>
<name>SUCC_ALKEH</name>
<accession>Q0A5K0</accession>
<proteinExistence type="inferred from homology"/>
<comment type="function">
    <text evidence="1">Succinyl-CoA synthetase functions in the citric acid cycle (TCA), coupling the hydrolysis of succinyl-CoA to the synthesis of either ATP or GTP and thus represents the only step of substrate-level phosphorylation in the TCA. The beta subunit provides nucleotide specificity of the enzyme and binds the substrate succinate, while the binding sites for coenzyme A and phosphate are found in the alpha subunit.</text>
</comment>
<comment type="catalytic activity">
    <reaction evidence="1">
        <text>succinate + ATP + CoA = succinyl-CoA + ADP + phosphate</text>
        <dbReference type="Rhea" id="RHEA:17661"/>
        <dbReference type="ChEBI" id="CHEBI:30031"/>
        <dbReference type="ChEBI" id="CHEBI:30616"/>
        <dbReference type="ChEBI" id="CHEBI:43474"/>
        <dbReference type="ChEBI" id="CHEBI:57287"/>
        <dbReference type="ChEBI" id="CHEBI:57292"/>
        <dbReference type="ChEBI" id="CHEBI:456216"/>
        <dbReference type="EC" id="6.2.1.5"/>
    </reaction>
    <physiologicalReaction direction="right-to-left" evidence="1">
        <dbReference type="Rhea" id="RHEA:17663"/>
    </physiologicalReaction>
</comment>
<comment type="catalytic activity">
    <reaction evidence="1">
        <text>GTP + succinate + CoA = succinyl-CoA + GDP + phosphate</text>
        <dbReference type="Rhea" id="RHEA:22120"/>
        <dbReference type="ChEBI" id="CHEBI:30031"/>
        <dbReference type="ChEBI" id="CHEBI:37565"/>
        <dbReference type="ChEBI" id="CHEBI:43474"/>
        <dbReference type="ChEBI" id="CHEBI:57287"/>
        <dbReference type="ChEBI" id="CHEBI:57292"/>
        <dbReference type="ChEBI" id="CHEBI:58189"/>
    </reaction>
    <physiologicalReaction direction="right-to-left" evidence="1">
        <dbReference type="Rhea" id="RHEA:22122"/>
    </physiologicalReaction>
</comment>
<comment type="cofactor">
    <cofactor evidence="1">
        <name>Mg(2+)</name>
        <dbReference type="ChEBI" id="CHEBI:18420"/>
    </cofactor>
    <text evidence="1">Binds 1 Mg(2+) ion per subunit.</text>
</comment>
<comment type="pathway">
    <text evidence="1">Carbohydrate metabolism; tricarboxylic acid cycle; succinate from succinyl-CoA (ligase route): step 1/1.</text>
</comment>
<comment type="subunit">
    <text evidence="1">Heterotetramer of two alpha and two beta subunits.</text>
</comment>
<comment type="similarity">
    <text evidence="1">Belongs to the succinate/malate CoA ligase beta subunit family.</text>
</comment>
<keyword id="KW-0067">ATP-binding</keyword>
<keyword id="KW-0436">Ligase</keyword>
<keyword id="KW-0460">Magnesium</keyword>
<keyword id="KW-0479">Metal-binding</keyword>
<keyword id="KW-0547">Nucleotide-binding</keyword>
<keyword id="KW-1185">Reference proteome</keyword>
<keyword id="KW-0816">Tricarboxylic acid cycle</keyword>
<gene>
    <name evidence="1" type="primary">sucC</name>
    <name type="ordered locus">Mlg_2547</name>
</gene>
<organism>
    <name type="scientific">Alkalilimnicola ehrlichii (strain ATCC BAA-1101 / DSM 17681 / MLHE-1)</name>
    <dbReference type="NCBI Taxonomy" id="187272"/>
    <lineage>
        <taxon>Bacteria</taxon>
        <taxon>Pseudomonadati</taxon>
        <taxon>Pseudomonadota</taxon>
        <taxon>Gammaproteobacteria</taxon>
        <taxon>Chromatiales</taxon>
        <taxon>Ectothiorhodospiraceae</taxon>
        <taxon>Alkalilimnicola</taxon>
    </lineage>
</organism>
<feature type="chain" id="PRO_1000081995" description="Succinate--CoA ligase [ADP-forming] subunit beta">
    <location>
        <begin position="1"/>
        <end position="391"/>
    </location>
</feature>
<feature type="domain" description="ATP-grasp" evidence="1">
    <location>
        <begin position="9"/>
        <end position="246"/>
    </location>
</feature>
<feature type="binding site" evidence="1">
    <location>
        <position position="46"/>
    </location>
    <ligand>
        <name>ATP</name>
        <dbReference type="ChEBI" id="CHEBI:30616"/>
    </ligand>
</feature>
<feature type="binding site" evidence="1">
    <location>
        <begin position="53"/>
        <end position="55"/>
    </location>
    <ligand>
        <name>ATP</name>
        <dbReference type="ChEBI" id="CHEBI:30616"/>
    </ligand>
</feature>
<feature type="binding site" evidence="1">
    <location>
        <position position="99"/>
    </location>
    <ligand>
        <name>ATP</name>
        <dbReference type="ChEBI" id="CHEBI:30616"/>
    </ligand>
</feature>
<feature type="binding site" evidence="1">
    <location>
        <position position="102"/>
    </location>
    <ligand>
        <name>ATP</name>
        <dbReference type="ChEBI" id="CHEBI:30616"/>
    </ligand>
</feature>
<feature type="binding site" evidence="1">
    <location>
        <position position="107"/>
    </location>
    <ligand>
        <name>ATP</name>
        <dbReference type="ChEBI" id="CHEBI:30616"/>
    </ligand>
</feature>
<feature type="binding site" evidence="1">
    <location>
        <position position="199"/>
    </location>
    <ligand>
        <name>Mg(2+)</name>
        <dbReference type="ChEBI" id="CHEBI:18420"/>
    </ligand>
</feature>
<feature type="binding site" evidence="1">
    <location>
        <position position="213"/>
    </location>
    <ligand>
        <name>Mg(2+)</name>
        <dbReference type="ChEBI" id="CHEBI:18420"/>
    </ligand>
</feature>
<feature type="binding site" evidence="1">
    <location>
        <position position="266"/>
    </location>
    <ligand>
        <name>substrate</name>
        <note>ligand shared with subunit alpha</note>
    </ligand>
</feature>
<feature type="binding site" evidence="1">
    <location>
        <begin position="323"/>
        <end position="325"/>
    </location>
    <ligand>
        <name>substrate</name>
        <note>ligand shared with subunit alpha</note>
    </ligand>
</feature>
<protein>
    <recommendedName>
        <fullName evidence="1">Succinate--CoA ligase [ADP-forming] subunit beta</fullName>
        <ecNumber evidence="1">6.2.1.5</ecNumber>
    </recommendedName>
    <alternativeName>
        <fullName evidence="1">Succinyl-CoA synthetase subunit beta</fullName>
        <shortName evidence="1">SCS-beta</shortName>
    </alternativeName>
</protein>
<dbReference type="EC" id="6.2.1.5" evidence="1"/>
<dbReference type="EMBL" id="CP000453">
    <property type="protein sequence ID" value="ABI57887.1"/>
    <property type="molecule type" value="Genomic_DNA"/>
</dbReference>
<dbReference type="RefSeq" id="WP_011630280.1">
    <property type="nucleotide sequence ID" value="NC_008340.1"/>
</dbReference>
<dbReference type="SMR" id="Q0A5K0"/>
<dbReference type="KEGG" id="aeh:Mlg_2547"/>
<dbReference type="eggNOG" id="COG0045">
    <property type="taxonomic scope" value="Bacteria"/>
</dbReference>
<dbReference type="HOGENOM" id="CLU_037430_0_2_6"/>
<dbReference type="OrthoDB" id="9802602at2"/>
<dbReference type="UniPathway" id="UPA00223">
    <property type="reaction ID" value="UER00999"/>
</dbReference>
<dbReference type="Proteomes" id="UP000001962">
    <property type="component" value="Chromosome"/>
</dbReference>
<dbReference type="GO" id="GO:0005829">
    <property type="term" value="C:cytosol"/>
    <property type="evidence" value="ECO:0007669"/>
    <property type="project" value="TreeGrafter"/>
</dbReference>
<dbReference type="GO" id="GO:0042709">
    <property type="term" value="C:succinate-CoA ligase complex"/>
    <property type="evidence" value="ECO:0007669"/>
    <property type="project" value="TreeGrafter"/>
</dbReference>
<dbReference type="GO" id="GO:0005524">
    <property type="term" value="F:ATP binding"/>
    <property type="evidence" value="ECO:0007669"/>
    <property type="project" value="UniProtKB-UniRule"/>
</dbReference>
<dbReference type="GO" id="GO:0000287">
    <property type="term" value="F:magnesium ion binding"/>
    <property type="evidence" value="ECO:0007669"/>
    <property type="project" value="UniProtKB-UniRule"/>
</dbReference>
<dbReference type="GO" id="GO:0004775">
    <property type="term" value="F:succinate-CoA ligase (ADP-forming) activity"/>
    <property type="evidence" value="ECO:0007669"/>
    <property type="project" value="UniProtKB-UniRule"/>
</dbReference>
<dbReference type="GO" id="GO:0004776">
    <property type="term" value="F:succinate-CoA ligase (GDP-forming) activity"/>
    <property type="evidence" value="ECO:0007669"/>
    <property type="project" value="RHEA"/>
</dbReference>
<dbReference type="GO" id="GO:0006104">
    <property type="term" value="P:succinyl-CoA metabolic process"/>
    <property type="evidence" value="ECO:0007669"/>
    <property type="project" value="TreeGrafter"/>
</dbReference>
<dbReference type="GO" id="GO:0006099">
    <property type="term" value="P:tricarboxylic acid cycle"/>
    <property type="evidence" value="ECO:0007669"/>
    <property type="project" value="UniProtKB-UniRule"/>
</dbReference>
<dbReference type="FunFam" id="3.30.1490.20:FF:000002">
    <property type="entry name" value="Succinate--CoA ligase [ADP-forming] subunit beta"/>
    <property type="match status" value="1"/>
</dbReference>
<dbReference type="FunFam" id="3.30.470.20:FF:000002">
    <property type="entry name" value="Succinate--CoA ligase [ADP-forming] subunit beta"/>
    <property type="match status" value="1"/>
</dbReference>
<dbReference type="FunFam" id="3.40.50.261:FF:000001">
    <property type="entry name" value="Succinate--CoA ligase [ADP-forming] subunit beta"/>
    <property type="match status" value="1"/>
</dbReference>
<dbReference type="Gene3D" id="3.30.1490.20">
    <property type="entry name" value="ATP-grasp fold, A domain"/>
    <property type="match status" value="1"/>
</dbReference>
<dbReference type="Gene3D" id="3.30.470.20">
    <property type="entry name" value="ATP-grasp fold, B domain"/>
    <property type="match status" value="1"/>
</dbReference>
<dbReference type="Gene3D" id="3.40.50.261">
    <property type="entry name" value="Succinyl-CoA synthetase domains"/>
    <property type="match status" value="1"/>
</dbReference>
<dbReference type="HAMAP" id="MF_00558">
    <property type="entry name" value="Succ_CoA_beta"/>
    <property type="match status" value="1"/>
</dbReference>
<dbReference type="InterPro" id="IPR011761">
    <property type="entry name" value="ATP-grasp"/>
</dbReference>
<dbReference type="InterPro" id="IPR013650">
    <property type="entry name" value="ATP-grasp_succ-CoA_synth-type"/>
</dbReference>
<dbReference type="InterPro" id="IPR013815">
    <property type="entry name" value="ATP_grasp_subdomain_1"/>
</dbReference>
<dbReference type="InterPro" id="IPR017866">
    <property type="entry name" value="Succ-CoA_synthase_bsu_CS"/>
</dbReference>
<dbReference type="InterPro" id="IPR005811">
    <property type="entry name" value="SUCC_ACL_C"/>
</dbReference>
<dbReference type="InterPro" id="IPR005809">
    <property type="entry name" value="Succ_CoA_ligase-like_bsu"/>
</dbReference>
<dbReference type="InterPro" id="IPR016102">
    <property type="entry name" value="Succinyl-CoA_synth-like"/>
</dbReference>
<dbReference type="NCBIfam" id="NF001913">
    <property type="entry name" value="PRK00696.1"/>
    <property type="match status" value="1"/>
</dbReference>
<dbReference type="NCBIfam" id="TIGR01016">
    <property type="entry name" value="sucCoAbeta"/>
    <property type="match status" value="1"/>
</dbReference>
<dbReference type="PANTHER" id="PTHR11815:SF10">
    <property type="entry name" value="SUCCINATE--COA LIGASE [GDP-FORMING] SUBUNIT BETA, MITOCHONDRIAL"/>
    <property type="match status" value="1"/>
</dbReference>
<dbReference type="PANTHER" id="PTHR11815">
    <property type="entry name" value="SUCCINYL-COA SYNTHETASE BETA CHAIN"/>
    <property type="match status" value="1"/>
</dbReference>
<dbReference type="Pfam" id="PF08442">
    <property type="entry name" value="ATP-grasp_2"/>
    <property type="match status" value="1"/>
</dbReference>
<dbReference type="Pfam" id="PF00549">
    <property type="entry name" value="Ligase_CoA"/>
    <property type="match status" value="1"/>
</dbReference>
<dbReference type="PIRSF" id="PIRSF001554">
    <property type="entry name" value="SucCS_beta"/>
    <property type="match status" value="1"/>
</dbReference>
<dbReference type="SUPFAM" id="SSF56059">
    <property type="entry name" value="Glutathione synthetase ATP-binding domain-like"/>
    <property type="match status" value="1"/>
</dbReference>
<dbReference type="SUPFAM" id="SSF52210">
    <property type="entry name" value="Succinyl-CoA synthetase domains"/>
    <property type="match status" value="1"/>
</dbReference>
<dbReference type="PROSITE" id="PS50975">
    <property type="entry name" value="ATP_GRASP"/>
    <property type="match status" value="1"/>
</dbReference>
<dbReference type="PROSITE" id="PS01217">
    <property type="entry name" value="SUCCINYL_COA_LIG_3"/>
    <property type="match status" value="1"/>
</dbReference>
<sequence>MNLHEFQAKHLFADYDIPIPQGYVARSSGEAVEAAGRLGGSVWVVKAQVHAGGRGKAGGVKVLKTKEEVEEFTDSLLGSRLVTHQTDAKGQPIHAVLVEQGLDIARELYLGALVDRASKRVTFMGSAAGGMDIEEVAASTPEKILTLAVDPAAGFQAYQGRKMAFALGLEGKQIGQLVKIMKSLYRIFEEKDLSMIEINPLIVTGDGQLLALDAKVNVDDNAVEIGRQPQIADMRDITQEDEAEVQAAEHNLNYITLDGNIGCMVNGAGLAMATMDVVNLHGGSPANFLDVGGGTTTERVTAAFKLILSSDTVEGILVNIFGGIVRCDVIAEGIIAAVKEVGVDVPVVVRLEGTNVEQGKQMLADSGMDLIPADDLTDAAKKVVAAVGKAA</sequence>